<name>SFB2_YEAST</name>
<gene>
    <name type="primary">SFB2</name>
    <name type="synonym">ISS1</name>
    <name type="ordered locus">YNL049C</name>
    <name type="ORF">N2505</name>
    <name type="ORF">YNL2505C</name>
</gene>
<keyword id="KW-0963">Cytoplasm</keyword>
<keyword id="KW-0256">Endoplasmic reticulum</keyword>
<keyword id="KW-0931">ER-Golgi transport</keyword>
<keyword id="KW-0333">Golgi apparatus</keyword>
<keyword id="KW-0472">Membrane</keyword>
<keyword id="KW-0597">Phosphoprotein</keyword>
<keyword id="KW-0653">Protein transport</keyword>
<keyword id="KW-1185">Reference proteome</keyword>
<keyword id="KW-0813">Transport</keyword>
<dbReference type="EMBL" id="AJ009783">
    <property type="protein sequence ID" value="CAA08830.1"/>
    <property type="molecule type" value="Genomic_DNA"/>
</dbReference>
<dbReference type="EMBL" id="U12141">
    <property type="protein sequence ID" value="AAA99663.1"/>
    <property type="molecule type" value="Genomic_DNA"/>
</dbReference>
<dbReference type="EMBL" id="Z71325">
    <property type="protein sequence ID" value="CAA95918.1"/>
    <property type="molecule type" value="Genomic_DNA"/>
</dbReference>
<dbReference type="EMBL" id="Z71324">
    <property type="protein sequence ID" value="CAA95917.1"/>
    <property type="molecule type" value="Genomic_DNA"/>
</dbReference>
<dbReference type="EMBL" id="AY692828">
    <property type="protein sequence ID" value="AAT92847.1"/>
    <property type="molecule type" value="Genomic_DNA"/>
</dbReference>
<dbReference type="EMBL" id="X94547">
    <property type="protein sequence ID" value="CAA64233.1"/>
    <property type="molecule type" value="Genomic_DNA"/>
</dbReference>
<dbReference type="EMBL" id="BK006947">
    <property type="protein sequence ID" value="DAA10496.1"/>
    <property type="molecule type" value="Genomic_DNA"/>
</dbReference>
<dbReference type="PIR" id="S62152">
    <property type="entry name" value="S62152"/>
</dbReference>
<dbReference type="RefSeq" id="NP_014349.1">
    <property type="nucleotide sequence ID" value="NM_001182888.1"/>
</dbReference>
<dbReference type="SMR" id="P53953"/>
<dbReference type="BioGRID" id="35775">
    <property type="interactions" value="172"/>
</dbReference>
<dbReference type="DIP" id="DIP-4370N"/>
<dbReference type="FunCoup" id="P53953">
    <property type="interactions" value="673"/>
</dbReference>
<dbReference type="IntAct" id="P53953">
    <property type="interactions" value="33"/>
</dbReference>
<dbReference type="MINT" id="P53953"/>
<dbReference type="STRING" id="4932.YNL049C"/>
<dbReference type="iPTMnet" id="P53953"/>
<dbReference type="PaxDb" id="4932-YNL049C"/>
<dbReference type="PeptideAtlas" id="P53953"/>
<dbReference type="EnsemblFungi" id="YNL049C_mRNA">
    <property type="protein sequence ID" value="YNL049C"/>
    <property type="gene ID" value="YNL049C"/>
</dbReference>
<dbReference type="GeneID" id="855678"/>
<dbReference type="KEGG" id="sce:YNL049C"/>
<dbReference type="AGR" id="SGD:S000004994"/>
<dbReference type="SGD" id="S000004994">
    <property type="gene designation" value="SFB2"/>
</dbReference>
<dbReference type="VEuPathDB" id="FungiDB:YNL049C"/>
<dbReference type="eggNOG" id="KOG1985">
    <property type="taxonomic scope" value="Eukaryota"/>
</dbReference>
<dbReference type="GeneTree" id="ENSGT00950000182924"/>
<dbReference type="HOGENOM" id="CLU_004589_2_1_1"/>
<dbReference type="InParanoid" id="P53953"/>
<dbReference type="OMA" id="NITNCDD"/>
<dbReference type="OrthoDB" id="49016at2759"/>
<dbReference type="BioCyc" id="YEAST:G3O-33082-MONOMER"/>
<dbReference type="Reactome" id="R-SCE-204005">
    <property type="pathway name" value="COPII-mediated vesicle transport"/>
</dbReference>
<dbReference type="Reactome" id="R-SCE-5694530">
    <property type="pathway name" value="Cargo concentration in the ER"/>
</dbReference>
<dbReference type="Reactome" id="R-SCE-983170">
    <property type="pathway name" value="Antigen Presentation: Folding, assembly and peptide loading of class I MHC"/>
</dbReference>
<dbReference type="BioGRID-ORCS" id="855678">
    <property type="hits" value="0 hits in 10 CRISPR screens"/>
</dbReference>
<dbReference type="PRO" id="PR:P53953"/>
<dbReference type="Proteomes" id="UP000002311">
    <property type="component" value="Chromosome XIV"/>
</dbReference>
<dbReference type="RNAct" id="P53953">
    <property type="molecule type" value="protein"/>
</dbReference>
<dbReference type="GO" id="GO:0030127">
    <property type="term" value="C:COPII vesicle coat"/>
    <property type="evidence" value="ECO:0000353"/>
    <property type="project" value="SGD"/>
</dbReference>
<dbReference type="GO" id="GO:0070971">
    <property type="term" value="C:endoplasmic reticulum exit site"/>
    <property type="evidence" value="ECO:0000318"/>
    <property type="project" value="GO_Central"/>
</dbReference>
<dbReference type="GO" id="GO:0005789">
    <property type="term" value="C:endoplasmic reticulum membrane"/>
    <property type="evidence" value="ECO:0007669"/>
    <property type="project" value="UniProtKB-SubCell"/>
</dbReference>
<dbReference type="GO" id="GO:0000139">
    <property type="term" value="C:Golgi membrane"/>
    <property type="evidence" value="ECO:0007669"/>
    <property type="project" value="UniProtKB-SubCell"/>
</dbReference>
<dbReference type="GO" id="GO:0005048">
    <property type="term" value="F:signal sequence binding"/>
    <property type="evidence" value="ECO:0000250"/>
    <property type="project" value="SGD"/>
</dbReference>
<dbReference type="GO" id="GO:0000149">
    <property type="term" value="F:SNARE binding"/>
    <property type="evidence" value="ECO:0000318"/>
    <property type="project" value="GO_Central"/>
</dbReference>
<dbReference type="GO" id="GO:0008270">
    <property type="term" value="F:zinc ion binding"/>
    <property type="evidence" value="ECO:0000318"/>
    <property type="project" value="GO_Central"/>
</dbReference>
<dbReference type="GO" id="GO:0090110">
    <property type="term" value="P:COPII-coated vesicle cargo loading"/>
    <property type="evidence" value="ECO:0000314"/>
    <property type="project" value="SGD"/>
</dbReference>
<dbReference type="GO" id="GO:0006886">
    <property type="term" value="P:intracellular protein transport"/>
    <property type="evidence" value="ECO:0007669"/>
    <property type="project" value="InterPro"/>
</dbReference>
<dbReference type="CDD" id="cd01479">
    <property type="entry name" value="Sec24-like"/>
    <property type="match status" value="1"/>
</dbReference>
<dbReference type="FunFam" id="3.40.20.10:FF:000049">
    <property type="entry name" value="Vesicle coat component"/>
    <property type="match status" value="1"/>
</dbReference>
<dbReference type="FunFam" id="3.40.50.410:FF:000081">
    <property type="entry name" value="Vesicle coat component"/>
    <property type="match status" value="1"/>
</dbReference>
<dbReference type="Gene3D" id="2.60.40.1670">
    <property type="entry name" value="beta-sandwich domain of Sec23/24"/>
    <property type="match status" value="1"/>
</dbReference>
<dbReference type="Gene3D" id="1.20.120.730">
    <property type="entry name" value="Sec23/Sec24 helical domain"/>
    <property type="match status" value="1"/>
</dbReference>
<dbReference type="Gene3D" id="3.40.20.10">
    <property type="entry name" value="Severin"/>
    <property type="match status" value="1"/>
</dbReference>
<dbReference type="Gene3D" id="3.40.50.410">
    <property type="entry name" value="von Willebrand factor, type A domain"/>
    <property type="match status" value="1"/>
</dbReference>
<dbReference type="Gene3D" id="2.30.30.380">
    <property type="entry name" value="Zn-finger domain of Sec23/24"/>
    <property type="match status" value="1"/>
</dbReference>
<dbReference type="InterPro" id="IPR029006">
    <property type="entry name" value="ADF-H/Gelsolin-like_dom_sf"/>
</dbReference>
<dbReference type="InterPro" id="IPR007123">
    <property type="entry name" value="Gelsolin-like_dom"/>
</dbReference>
<dbReference type="InterPro" id="IPR036180">
    <property type="entry name" value="Gelsolin-like_dom_sf"/>
</dbReference>
<dbReference type="InterPro" id="IPR006900">
    <property type="entry name" value="Sec23/24_helical_dom"/>
</dbReference>
<dbReference type="InterPro" id="IPR036175">
    <property type="entry name" value="Sec23/24_helical_dom_sf"/>
</dbReference>
<dbReference type="InterPro" id="IPR006896">
    <property type="entry name" value="Sec23/24_trunk_dom"/>
</dbReference>
<dbReference type="InterPro" id="IPR012990">
    <property type="entry name" value="Sec23_24_beta_S"/>
</dbReference>
<dbReference type="InterPro" id="IPR050550">
    <property type="entry name" value="SEC23_SEC24_subfamily"/>
</dbReference>
<dbReference type="InterPro" id="IPR041742">
    <property type="entry name" value="Sec24-like_trunk_dom"/>
</dbReference>
<dbReference type="InterPro" id="IPR036465">
    <property type="entry name" value="vWFA_dom_sf"/>
</dbReference>
<dbReference type="InterPro" id="IPR006895">
    <property type="entry name" value="Znf_Sec23_Sec24"/>
</dbReference>
<dbReference type="InterPro" id="IPR036174">
    <property type="entry name" value="Znf_Sec23_Sec24_sf"/>
</dbReference>
<dbReference type="PANTHER" id="PTHR13803">
    <property type="entry name" value="SEC24-RELATED PROTEIN"/>
    <property type="match status" value="1"/>
</dbReference>
<dbReference type="PANTHER" id="PTHR13803:SF39">
    <property type="entry name" value="SECRETORY 24AB, ISOFORM A"/>
    <property type="match status" value="1"/>
</dbReference>
<dbReference type="Pfam" id="PF00626">
    <property type="entry name" value="Gelsolin"/>
    <property type="match status" value="1"/>
</dbReference>
<dbReference type="Pfam" id="PF08033">
    <property type="entry name" value="Sec23_BS"/>
    <property type="match status" value="1"/>
</dbReference>
<dbReference type="Pfam" id="PF04815">
    <property type="entry name" value="Sec23_helical"/>
    <property type="match status" value="1"/>
</dbReference>
<dbReference type="Pfam" id="PF04811">
    <property type="entry name" value="Sec23_trunk"/>
    <property type="match status" value="1"/>
</dbReference>
<dbReference type="Pfam" id="PF04810">
    <property type="entry name" value="zf-Sec23_Sec24"/>
    <property type="match status" value="1"/>
</dbReference>
<dbReference type="SUPFAM" id="SSF81995">
    <property type="entry name" value="beta-sandwich domain of Sec23/24"/>
    <property type="match status" value="1"/>
</dbReference>
<dbReference type="SUPFAM" id="SSF82754">
    <property type="entry name" value="C-terminal, gelsolin-like domain of Sec23/24"/>
    <property type="match status" value="1"/>
</dbReference>
<dbReference type="SUPFAM" id="SSF81811">
    <property type="entry name" value="Helical domain of Sec23/24"/>
    <property type="match status" value="1"/>
</dbReference>
<dbReference type="SUPFAM" id="SSF53300">
    <property type="entry name" value="vWA-like"/>
    <property type="match status" value="1"/>
</dbReference>
<dbReference type="SUPFAM" id="SSF82919">
    <property type="entry name" value="Zn-finger domain of Sec23/24"/>
    <property type="match status" value="1"/>
</dbReference>
<organism>
    <name type="scientific">Saccharomyces cerevisiae (strain ATCC 204508 / S288c)</name>
    <name type="common">Baker's yeast</name>
    <dbReference type="NCBI Taxonomy" id="559292"/>
    <lineage>
        <taxon>Eukaryota</taxon>
        <taxon>Fungi</taxon>
        <taxon>Dikarya</taxon>
        <taxon>Ascomycota</taxon>
        <taxon>Saccharomycotina</taxon>
        <taxon>Saccharomycetes</taxon>
        <taxon>Saccharomycetales</taxon>
        <taxon>Saccharomycetaceae</taxon>
        <taxon>Saccharomyces</taxon>
    </lineage>
</organism>
<feature type="chain" id="PRO_0000205151" description="SED5-binding protein 2">
    <location>
        <begin position="1"/>
        <end position="876"/>
    </location>
</feature>
<feature type="region of interest" description="Zinc finger-like">
    <location>
        <begin position="164"/>
        <end position="189"/>
    </location>
</feature>
<feature type="region of interest" description="Disordered" evidence="2">
    <location>
        <begin position="300"/>
        <end position="326"/>
    </location>
</feature>
<feature type="compositionally biased region" description="Acidic residues" evidence="2">
    <location>
        <begin position="300"/>
        <end position="324"/>
    </location>
</feature>
<feature type="modified residue" description="Phosphoserine" evidence="10 11">
    <location>
        <position position="51"/>
    </location>
</feature>
<reference key="1">
    <citation type="journal article" date="2000" name="J. Biol. Chem.">
        <title>Evidence for overlapping and distinct functions in protein transport of coat protein Sec24p family members.</title>
        <authorList>
            <person name="Peng R."/>
            <person name="De Antoni A."/>
            <person name="Gallwitz D."/>
        </authorList>
    </citation>
    <scope>NUCLEOTIDE SEQUENCE [GENOMIC DNA]</scope>
    <scope>FUNCTION</scope>
</reference>
<reference key="2">
    <citation type="journal article" date="1995" name="Yeast">
        <title>The sequence of a 44 420 bp fragment located on the left arm of chromosome XIV from Saccharomyces cerevisiae.</title>
        <authorList>
            <person name="Bergez P."/>
            <person name="Doignon F."/>
            <person name="Crouzet M."/>
        </authorList>
    </citation>
    <scope>NUCLEOTIDE SEQUENCE [GENOMIC DNA]</scope>
    <source>
        <strain>S288c / FY1676</strain>
    </source>
</reference>
<reference key="3">
    <citation type="journal article" date="1996" name="Yeast">
        <authorList>
            <person name="Bergez P."/>
            <person name="Doignon F."/>
            <person name="Crouzet M."/>
        </authorList>
    </citation>
    <scope>ERRATUM OF PUBMED:8533472</scope>
</reference>
<reference key="4">
    <citation type="journal article" date="1997" name="Nature">
        <title>The nucleotide sequence of Saccharomyces cerevisiae chromosome XIV and its evolutionary implications.</title>
        <authorList>
            <person name="Philippsen P."/>
            <person name="Kleine K."/>
            <person name="Poehlmann R."/>
            <person name="Duesterhoeft A."/>
            <person name="Hamberg K."/>
            <person name="Hegemann J.H."/>
            <person name="Obermaier B."/>
            <person name="Urrestarazu L.A."/>
            <person name="Aert R."/>
            <person name="Albermann K."/>
            <person name="Altmann R."/>
            <person name="Andre B."/>
            <person name="Baladron V."/>
            <person name="Ballesta J.P.G."/>
            <person name="Becam A.-M."/>
            <person name="Beinhauer J.D."/>
            <person name="Boskovic J."/>
            <person name="Buitrago M.J."/>
            <person name="Bussereau F."/>
            <person name="Coster F."/>
            <person name="Crouzet M."/>
            <person name="D'Angelo M."/>
            <person name="Dal Pero F."/>
            <person name="De Antoni A."/>
            <person name="del Rey F."/>
            <person name="Doignon F."/>
            <person name="Domdey H."/>
            <person name="Dubois E."/>
            <person name="Fiedler T.A."/>
            <person name="Fleig U."/>
            <person name="Floeth M."/>
            <person name="Fritz C."/>
            <person name="Gaillardin C."/>
            <person name="Garcia-Cantalejo J.M."/>
            <person name="Glansdorff N."/>
            <person name="Goffeau A."/>
            <person name="Gueldener U."/>
            <person name="Herbert C.J."/>
            <person name="Heumann K."/>
            <person name="Heuss-Neitzel D."/>
            <person name="Hilbert H."/>
            <person name="Hinni K."/>
            <person name="Iraqui Houssaini I."/>
            <person name="Jacquet M."/>
            <person name="Jimenez A."/>
            <person name="Jonniaux J.-L."/>
            <person name="Karpfinger-Hartl L."/>
            <person name="Lanfranchi G."/>
            <person name="Lepingle A."/>
            <person name="Levesque H."/>
            <person name="Lyck R."/>
            <person name="Maftahi M."/>
            <person name="Mallet L."/>
            <person name="Maurer C.T.C."/>
            <person name="Messenguy F."/>
            <person name="Mewes H.-W."/>
            <person name="Moestl D."/>
            <person name="Nasr F."/>
            <person name="Nicaud J.-M."/>
            <person name="Niedenthal R.K."/>
            <person name="Pandolfo D."/>
            <person name="Pierard A."/>
            <person name="Piravandi E."/>
            <person name="Planta R.J."/>
            <person name="Pohl T.M."/>
            <person name="Purnelle B."/>
            <person name="Rebischung C."/>
            <person name="Remacha M.A."/>
            <person name="Revuelta J.L."/>
            <person name="Rinke M."/>
            <person name="Saiz J.E."/>
            <person name="Sartorello F."/>
            <person name="Scherens B."/>
            <person name="Sen-Gupta M."/>
            <person name="Soler-Mira A."/>
            <person name="Urbanus J.H.M."/>
            <person name="Valle G."/>
            <person name="Van Dyck L."/>
            <person name="Verhasselt P."/>
            <person name="Vierendeels F."/>
            <person name="Vissers S."/>
            <person name="Voet M."/>
            <person name="Volckaert G."/>
            <person name="Wach A."/>
            <person name="Wambutt R."/>
            <person name="Wedler H."/>
            <person name="Zollner A."/>
            <person name="Hani J."/>
        </authorList>
    </citation>
    <scope>NUCLEOTIDE SEQUENCE [LARGE SCALE GENOMIC DNA]</scope>
    <source>
        <strain>ATCC 204508 / S288c</strain>
    </source>
</reference>
<reference key="5">
    <citation type="journal article" date="2014" name="G3 (Bethesda)">
        <title>The reference genome sequence of Saccharomyces cerevisiae: Then and now.</title>
        <authorList>
            <person name="Engel S.R."/>
            <person name="Dietrich F.S."/>
            <person name="Fisk D.G."/>
            <person name="Binkley G."/>
            <person name="Balakrishnan R."/>
            <person name="Costanzo M.C."/>
            <person name="Dwight S.S."/>
            <person name="Hitz B.C."/>
            <person name="Karra K."/>
            <person name="Nash R.S."/>
            <person name="Weng S."/>
            <person name="Wong E.D."/>
            <person name="Lloyd P."/>
            <person name="Skrzypek M.S."/>
            <person name="Miyasato S.R."/>
            <person name="Simison M."/>
            <person name="Cherry J.M."/>
        </authorList>
    </citation>
    <scope>GENOME REANNOTATION</scope>
    <source>
        <strain>ATCC 204508 / S288c</strain>
    </source>
</reference>
<reference key="6">
    <citation type="journal article" date="2007" name="Genome Res.">
        <title>Approaching a complete repository of sequence-verified protein-encoding clones for Saccharomyces cerevisiae.</title>
        <authorList>
            <person name="Hu Y."/>
            <person name="Rolfs A."/>
            <person name="Bhullar B."/>
            <person name="Murthy T.V.S."/>
            <person name="Zhu C."/>
            <person name="Berger M.F."/>
            <person name="Camargo A.A."/>
            <person name="Kelley F."/>
            <person name="McCarron S."/>
            <person name="Jepson D."/>
            <person name="Richardson A."/>
            <person name="Raphael J."/>
            <person name="Moreira D."/>
            <person name="Taycher E."/>
            <person name="Zuo D."/>
            <person name="Mohr S."/>
            <person name="Kane M.F."/>
            <person name="Williamson J."/>
            <person name="Simpson A.J.G."/>
            <person name="Bulyk M.L."/>
            <person name="Harlow E."/>
            <person name="Marsischky G."/>
            <person name="Kolodner R.D."/>
            <person name="LaBaer J."/>
        </authorList>
    </citation>
    <scope>NUCLEOTIDE SEQUENCE [GENOMIC DNA]</scope>
    <source>
        <strain>ATCC 204508 / S288c</strain>
    </source>
</reference>
<reference key="7">
    <citation type="journal article" date="1996" name="Yeast">
        <title>The sequence of 12.8 kb from the left arm of chromosome XIV reveals a sigma element, a pro-tRNA and six complete open reading frames, one of which encodes a protein similar to the human leukotriene A4 hydrolase.</title>
        <authorList>
            <person name="Nasr F."/>
            <person name="Becam A.-M."/>
            <person name="Herbert C.J."/>
        </authorList>
    </citation>
    <scope>NUCLEOTIDE SEQUENCE [GENOMIC DNA] OF 1-544</scope>
    <source>
        <strain>ATCC 96604 / S288c / FY1679</strain>
    </source>
</reference>
<reference key="8">
    <citation type="journal article" date="2000" name="J. Biol. Chem.">
        <title>Sfb2p, a yeast protein related to Sec24p, can function as a constituent of COPII coats required for vesicle budding from the endoplasmic reticulum.</title>
        <authorList>
            <person name="Higashio H."/>
            <person name="Kimata Y."/>
            <person name="Kiriyama T."/>
            <person name="Hirata A."/>
            <person name="Kohno K."/>
        </authorList>
    </citation>
    <scope>FUNCTION</scope>
</reference>
<reference key="9">
    <citation type="journal article" date="2000" name="Mol. Biol. Cell">
        <title>Sec24p and Iss1p function interchangeably in transport vesicle formation from the endoplasmic reticulum in Saccharomyces cerevisiae.</title>
        <authorList>
            <person name="Kurihara T."/>
            <person name="Hamamoto S."/>
            <person name="Gimeno R.E."/>
            <person name="Kaiser C.A."/>
            <person name="Schekman R.W."/>
            <person name="Yoshihisa T."/>
        </authorList>
    </citation>
    <scope>FUNCTION</scope>
</reference>
<reference key="10">
    <citation type="journal article" date="2003" name="Nature">
        <title>Global analysis of protein expression in yeast.</title>
        <authorList>
            <person name="Ghaemmaghami S."/>
            <person name="Huh W.-K."/>
            <person name="Bower K."/>
            <person name="Howson R.W."/>
            <person name="Belle A."/>
            <person name="Dephoure N."/>
            <person name="O'Shea E.K."/>
            <person name="Weissman J.S."/>
        </authorList>
    </citation>
    <scope>LEVEL OF PROTEIN EXPRESSION [LARGE SCALE ANALYSIS]</scope>
</reference>
<reference key="11">
    <citation type="journal article" date="2005" name="Cell">
        <title>Exploration of the function and organization of the yeast early secretory pathway through an epistatic miniarray profile.</title>
        <authorList>
            <person name="Schuldiner M."/>
            <person name="Collins S.R."/>
            <person name="Thompson N.J."/>
            <person name="Denic V."/>
            <person name="Bhamidipati A."/>
            <person name="Punna T."/>
            <person name="Ihmels J."/>
            <person name="Andrews B."/>
            <person name="Boone C."/>
            <person name="Greenblatt J.F."/>
            <person name="Weissman J.S."/>
            <person name="Krogan N.J."/>
        </authorList>
    </citation>
    <scope>FUNCTION</scope>
    <scope>INTERACTION WITH GRH1</scope>
</reference>
<reference key="12">
    <citation type="journal article" date="2005" name="Mol. Cell. Proteomics">
        <title>Quantitative phosphoproteomics applied to the yeast pheromone signaling pathway.</title>
        <authorList>
            <person name="Gruhler A."/>
            <person name="Olsen J.V."/>
            <person name="Mohammed S."/>
            <person name="Mortensen P."/>
            <person name="Faergeman N.J."/>
            <person name="Mann M."/>
            <person name="Jensen O.N."/>
        </authorList>
    </citation>
    <scope>PHOSPHORYLATION [LARGE SCALE ANALYSIS] AT SER-51</scope>
    <scope>IDENTIFICATION BY MASS SPECTROMETRY [LARGE SCALE ANALYSIS]</scope>
    <source>
        <strain>YAL6B</strain>
    </source>
</reference>
<reference key="13">
    <citation type="journal article" date="2007" name="J. Cell Biol.">
        <title>The yeast orthologue of GRASP65 forms a complex with a coiled-coil protein that contributes to ER to Golgi traffic.</title>
        <authorList>
            <person name="Behnia R."/>
            <person name="Barr F.A."/>
            <person name="Flanagan J.J."/>
            <person name="Barlowe C."/>
            <person name="Munro S."/>
        </authorList>
    </citation>
    <scope>INTERACTION WITH GRH1</scope>
</reference>
<reference key="14">
    <citation type="journal article" date="2007" name="J. Proteome Res.">
        <title>Large-scale phosphorylation analysis of alpha-factor-arrested Saccharomyces cerevisiae.</title>
        <authorList>
            <person name="Li X."/>
            <person name="Gerber S.A."/>
            <person name="Rudner A.D."/>
            <person name="Beausoleil S.A."/>
            <person name="Haas W."/>
            <person name="Villen J."/>
            <person name="Elias J.E."/>
            <person name="Gygi S.P."/>
        </authorList>
    </citation>
    <scope>IDENTIFICATION BY MASS SPECTROMETRY [LARGE SCALE ANALYSIS]</scope>
    <source>
        <strain>ADR376</strain>
    </source>
</reference>
<reference key="15">
    <citation type="journal article" date="2008" name="Mol. Cell. Proteomics">
        <title>A multidimensional chromatography technology for in-depth phosphoproteome analysis.</title>
        <authorList>
            <person name="Albuquerque C.P."/>
            <person name="Smolka M.B."/>
            <person name="Payne S.H."/>
            <person name="Bafna V."/>
            <person name="Eng J."/>
            <person name="Zhou H."/>
        </authorList>
    </citation>
    <scope>IDENTIFICATION BY MASS SPECTROMETRY [LARGE SCALE ANALYSIS]</scope>
</reference>
<reference key="16">
    <citation type="journal article" date="2009" name="Science">
        <title>Global analysis of Cdk1 substrate phosphorylation sites provides insights into evolution.</title>
        <authorList>
            <person name="Holt L.J."/>
            <person name="Tuch B.B."/>
            <person name="Villen J."/>
            <person name="Johnson A.D."/>
            <person name="Gygi S.P."/>
            <person name="Morgan D.O."/>
        </authorList>
    </citation>
    <scope>PHOSPHORYLATION [LARGE SCALE ANALYSIS] AT SER-51</scope>
    <scope>IDENTIFICATION BY MASS SPECTROMETRY [LARGE SCALE ANALYSIS]</scope>
</reference>
<accession>P53953</accession>
<accession>D6W1D0</accession>
<sequence length="876" mass="98944">MSHHKKRVYPQAQVPYIASMPIVAEQQQSQQQIDQTAYAMGNLQLNNRANSFTQLAQNQQFPGSGKVVNQLYPVDLFTELPPPIRDLSLPPLPITISQDNIVTPSEYSNVPYQYVRSTLKAVPKTNSLLKKTKLPFAIVIRPYLHLQDSDNQVPLNTDGVIVRCRRCRSYMNPFVVFINQGRKWQCNICRFKNDVPFGFDQNLQGAPINRYERNEIKNSVVDYLAPVEYSVREPPPSVYVFLLDVSQNAVKNGLLATSARTILENIEFLPNHDGRTRIAIICVDHSLHYFYVPLDDDYEVSDEDDEESDGEEEDEDEEEEDVDNSETIQMFDIGDLDEPFLPMPSDELVVPLKYCKNNLETLLKKIPEIFQDTHSSKFALGPALKAASNLIKSTGGKVEVISSTLPNTGIGKLKKRSEQGILNTPKESSQLLSCKDSFYKTFTIECNKLQITVDMFLASEDYMDVATLSHLGRFSGGQTHFYPGFNATSLNDVTKFTRELSRHLSMDISMEAVMRVRCSTGLRATSFFGHFFNRSSDLCAFSTMPRDQSYLFGISIEDSLMAEYCYLQVSTLLTLNTGERRIRVMTLALPTSESAREVFASADQLAITDFMTQNAVTKALNSSMYSARDFITKSLEDILNAYKKEISMSNINSVTSLNLCANLRMLPLLMNGLSKHIALRPGVVPSDYRASALNRLETEPLHYLIKSIYPTVYSLHDMPDEVGLPDFEGKTVLPEPINATISLFERYGLYLIDNSAELFLWVGGDAVPELLIDVFNTDTISQIPVGKSELPLLNDSPFNERLRRIIGRIRENNDTITFQSLYIIRGPSINEPANLNSEKDMASLRLWVLSTLVEDKVLNCASYREYLQSMKTSINR</sequence>
<evidence type="ECO:0000250" key="1"/>
<evidence type="ECO:0000256" key="2">
    <source>
        <dbReference type="SAM" id="MobiDB-lite"/>
    </source>
</evidence>
<evidence type="ECO:0000269" key="3">
    <source>
    </source>
</evidence>
<evidence type="ECO:0000269" key="4">
    <source>
    </source>
</evidence>
<evidence type="ECO:0000269" key="5">
    <source>
    </source>
</evidence>
<evidence type="ECO:0000269" key="6">
    <source>
    </source>
</evidence>
<evidence type="ECO:0000269" key="7">
    <source>
    </source>
</evidence>
<evidence type="ECO:0000269" key="8">
    <source>
    </source>
</evidence>
<evidence type="ECO:0000305" key="9"/>
<evidence type="ECO:0007744" key="10">
    <source>
    </source>
</evidence>
<evidence type="ECO:0007744" key="11">
    <source>
    </source>
</evidence>
<comment type="function">
    <text evidence="3 4 5 7">Component of the COPII coat, that covers ER-derived vesicles involved in transport from the endoplasmic reticulum to the Golgi apparatus. COPII acts in the cytoplasm to promote the transport of secretory, plasma membrane, and vacuolar proteins from the endoplasmic reticulum to the Golgi complex.</text>
</comment>
<comment type="subunit">
    <text evidence="7 8">COPII is composed of at least five proteins: the SEC23/24 complex, the SEC13/31 complex and SAR1. Interacts with GRH1.</text>
</comment>
<comment type="interaction">
    <interactant intactId="EBI-17006">
        <id>P53953</id>
    </interactant>
    <interactant intactId="EBI-16584">
        <id>P15303</id>
        <label>SEC23</label>
    </interactant>
    <organismsDiffer>false</organismsDiffer>
    <experiments>5</experiments>
</comment>
<comment type="subcellular location">
    <subcellularLocation>
        <location evidence="1">Cytoplasm</location>
    </subcellularLocation>
    <subcellularLocation>
        <location evidence="1">Golgi apparatus membrane</location>
    </subcellularLocation>
    <subcellularLocation>
        <location evidence="1">Endoplasmic reticulum membrane</location>
    </subcellularLocation>
</comment>
<comment type="miscellaneous">
    <text evidence="6">Present with 1720 molecules/cell in log phase SD medium.</text>
</comment>
<comment type="similarity">
    <text evidence="9">Belongs to the SEC23/SEC24 family. SEC24 subfamily.</text>
</comment>
<protein>
    <recommendedName>
        <fullName>SED5-binding protein 2</fullName>
    </recommendedName>
    <alternativeName>
        <fullName>SEC24-related protein 2</fullName>
    </alternativeName>
</protein>
<proteinExistence type="evidence at protein level"/>